<protein>
    <recommendedName>
        <fullName evidence="1">Cytochrome c biogenesis ATP-binding export protein CcmA</fullName>
        <ecNumber evidence="1">7.6.2.5</ecNumber>
    </recommendedName>
    <alternativeName>
        <fullName evidence="1">Heme exporter protein A</fullName>
    </alternativeName>
</protein>
<feature type="chain" id="PRO_0000092170" description="Cytochrome c biogenesis ATP-binding export protein CcmA">
    <location>
        <begin position="1"/>
        <end position="208"/>
    </location>
</feature>
<feature type="domain" description="ABC transporter" evidence="1">
    <location>
        <begin position="3"/>
        <end position="206"/>
    </location>
</feature>
<feature type="binding site" evidence="1">
    <location>
        <begin position="35"/>
        <end position="42"/>
    </location>
    <ligand>
        <name>ATP</name>
        <dbReference type="ChEBI" id="CHEBI:30616"/>
    </ligand>
</feature>
<name>CCMA_BARQU</name>
<accession>Q6G0V9</accession>
<keyword id="KW-0067">ATP-binding</keyword>
<keyword id="KW-0997">Cell inner membrane</keyword>
<keyword id="KW-1003">Cell membrane</keyword>
<keyword id="KW-0201">Cytochrome c-type biogenesis</keyword>
<keyword id="KW-0472">Membrane</keyword>
<keyword id="KW-0547">Nucleotide-binding</keyword>
<keyword id="KW-1278">Translocase</keyword>
<keyword id="KW-0813">Transport</keyword>
<organism>
    <name type="scientific">Bartonella quintana (strain Toulouse)</name>
    <name type="common">Rochalimaea quintana</name>
    <dbReference type="NCBI Taxonomy" id="283165"/>
    <lineage>
        <taxon>Bacteria</taxon>
        <taxon>Pseudomonadati</taxon>
        <taxon>Pseudomonadota</taxon>
        <taxon>Alphaproteobacteria</taxon>
        <taxon>Hyphomicrobiales</taxon>
        <taxon>Bartonellaceae</taxon>
        <taxon>Bartonella</taxon>
    </lineage>
</organism>
<sequence>MVLSGKDLAAHRKEEILFQGLSFCLFPHQLMTITGPNGIGKSTLLRIIVGLFEAAEGHVSLKDHEQTYPVATACHYLGPQNAMKPFLSVIDNLQFWSAFYGQYLRSPHEALADMGLSDLAPLPFNVLSTGQKRCVAIARLLLSYRPIWILDEPISGLDSHAQTLLANLFQRHLNQGGMIIAATHSPFGIPENHKIALEKFVPSQERRE</sequence>
<comment type="function">
    <text evidence="1">Part of the ABC transporter complex CcmAB involved in the biogenesis of c-type cytochromes; once thought to export heme, this seems not to be the case, but its exact role is uncertain. Responsible for energy coupling to the transport system.</text>
</comment>
<comment type="catalytic activity">
    <reaction evidence="1">
        <text>heme b(in) + ATP + H2O = heme b(out) + ADP + phosphate + H(+)</text>
        <dbReference type="Rhea" id="RHEA:19261"/>
        <dbReference type="ChEBI" id="CHEBI:15377"/>
        <dbReference type="ChEBI" id="CHEBI:15378"/>
        <dbReference type="ChEBI" id="CHEBI:30616"/>
        <dbReference type="ChEBI" id="CHEBI:43474"/>
        <dbReference type="ChEBI" id="CHEBI:60344"/>
        <dbReference type="ChEBI" id="CHEBI:456216"/>
        <dbReference type="EC" id="7.6.2.5"/>
    </reaction>
</comment>
<comment type="subunit">
    <text evidence="1">The complex is composed of two ATP-binding proteins (CcmA) and two transmembrane proteins (CcmB).</text>
</comment>
<comment type="subcellular location">
    <subcellularLocation>
        <location evidence="1">Cell inner membrane</location>
        <topology evidence="1">Peripheral membrane protein</topology>
    </subcellularLocation>
</comment>
<comment type="similarity">
    <text evidence="1">Belongs to the ABC transporter superfamily. CcmA exporter (TC 3.A.1.107) family.</text>
</comment>
<reference key="1">
    <citation type="journal article" date="2004" name="Proc. Natl. Acad. Sci. U.S.A.">
        <title>The louse-borne human pathogen Bartonella quintana is a genomic derivative of the zoonotic agent Bartonella henselae.</title>
        <authorList>
            <person name="Alsmark U.C.M."/>
            <person name="Frank A.C."/>
            <person name="Karlberg E.O."/>
            <person name="Legault B.-A."/>
            <person name="Ardell D.H."/>
            <person name="Canbaeck B."/>
            <person name="Eriksson A.-S."/>
            <person name="Naeslund A.K."/>
            <person name="Handley S.A."/>
            <person name="Huvet M."/>
            <person name="La Scola B."/>
            <person name="Holmberg M."/>
            <person name="Andersson S.G.E."/>
        </authorList>
    </citation>
    <scope>NUCLEOTIDE SEQUENCE [LARGE SCALE GENOMIC DNA]</scope>
    <source>
        <strain>Toulouse</strain>
    </source>
</reference>
<evidence type="ECO:0000255" key="1">
    <source>
        <dbReference type="HAMAP-Rule" id="MF_01707"/>
    </source>
</evidence>
<proteinExistence type="inferred from homology"/>
<gene>
    <name evidence="1" type="primary">ccmA</name>
    <name type="ordered locus">BQ01080</name>
</gene>
<dbReference type="EC" id="7.6.2.5" evidence="1"/>
<dbReference type="EMBL" id="BX897700">
    <property type="protein sequence ID" value="CAF25614.1"/>
    <property type="molecule type" value="Genomic_DNA"/>
</dbReference>
<dbReference type="RefSeq" id="WP_011178936.1">
    <property type="nucleotide sequence ID" value="NC_005955.1"/>
</dbReference>
<dbReference type="SMR" id="Q6G0V9"/>
<dbReference type="KEGG" id="bqu:BQ01080"/>
<dbReference type="eggNOG" id="COG4133">
    <property type="taxonomic scope" value="Bacteria"/>
</dbReference>
<dbReference type="HOGENOM" id="CLU_000604_1_2_5"/>
<dbReference type="OrthoDB" id="9800654at2"/>
<dbReference type="Proteomes" id="UP000000597">
    <property type="component" value="Chromosome"/>
</dbReference>
<dbReference type="GO" id="GO:0005886">
    <property type="term" value="C:plasma membrane"/>
    <property type="evidence" value="ECO:0007669"/>
    <property type="project" value="UniProtKB-SubCell"/>
</dbReference>
<dbReference type="GO" id="GO:0015439">
    <property type="term" value="F:ABC-type heme transporter activity"/>
    <property type="evidence" value="ECO:0007669"/>
    <property type="project" value="UniProtKB-EC"/>
</dbReference>
<dbReference type="GO" id="GO:0005524">
    <property type="term" value="F:ATP binding"/>
    <property type="evidence" value="ECO:0007669"/>
    <property type="project" value="UniProtKB-KW"/>
</dbReference>
<dbReference type="GO" id="GO:0016887">
    <property type="term" value="F:ATP hydrolysis activity"/>
    <property type="evidence" value="ECO:0007669"/>
    <property type="project" value="InterPro"/>
</dbReference>
<dbReference type="GO" id="GO:0017004">
    <property type="term" value="P:cytochrome complex assembly"/>
    <property type="evidence" value="ECO:0007669"/>
    <property type="project" value="UniProtKB-KW"/>
</dbReference>
<dbReference type="Gene3D" id="3.40.50.300">
    <property type="entry name" value="P-loop containing nucleotide triphosphate hydrolases"/>
    <property type="match status" value="1"/>
</dbReference>
<dbReference type="InterPro" id="IPR003593">
    <property type="entry name" value="AAA+_ATPase"/>
</dbReference>
<dbReference type="InterPro" id="IPR003439">
    <property type="entry name" value="ABC_transporter-like_ATP-bd"/>
</dbReference>
<dbReference type="InterPro" id="IPR005895">
    <property type="entry name" value="ABC_transptr_haem_export_CcmA"/>
</dbReference>
<dbReference type="InterPro" id="IPR027417">
    <property type="entry name" value="P-loop_NTPase"/>
</dbReference>
<dbReference type="NCBIfam" id="TIGR01189">
    <property type="entry name" value="ccmA"/>
    <property type="match status" value="1"/>
</dbReference>
<dbReference type="PANTHER" id="PTHR43499">
    <property type="entry name" value="ABC TRANSPORTER I FAMILY MEMBER 1"/>
    <property type="match status" value="1"/>
</dbReference>
<dbReference type="PANTHER" id="PTHR43499:SF1">
    <property type="entry name" value="ABC TRANSPORTER I FAMILY MEMBER 1"/>
    <property type="match status" value="1"/>
</dbReference>
<dbReference type="Pfam" id="PF00005">
    <property type="entry name" value="ABC_tran"/>
    <property type="match status" value="1"/>
</dbReference>
<dbReference type="SMART" id="SM00382">
    <property type="entry name" value="AAA"/>
    <property type="match status" value="1"/>
</dbReference>
<dbReference type="SUPFAM" id="SSF52540">
    <property type="entry name" value="P-loop containing nucleoside triphosphate hydrolases"/>
    <property type="match status" value="1"/>
</dbReference>
<dbReference type="PROSITE" id="PS50893">
    <property type="entry name" value="ABC_TRANSPORTER_2"/>
    <property type="match status" value="1"/>
</dbReference>
<dbReference type="PROSITE" id="PS51243">
    <property type="entry name" value="CCMA"/>
    <property type="match status" value="1"/>
</dbReference>